<proteinExistence type="evidence at protein level"/>
<protein>
    <recommendedName>
        <fullName>Tyrosine-protein phosphatase non-receptor type 13</fullName>
        <ecNumber evidence="17 18">3.1.3.48</ecNumber>
    </recommendedName>
    <alternativeName>
        <fullName>Fas-associated protein-tyrosine phosphatase 1</fullName>
        <shortName>FAP-1</shortName>
    </alternativeName>
    <alternativeName>
        <fullName>PTP-BAS</fullName>
    </alternativeName>
    <alternativeName>
        <fullName>Protein-tyrosine phosphatase 1E</fullName>
        <shortName>PTP-E1</shortName>
        <shortName>hPTPE1</shortName>
    </alternativeName>
    <alternativeName>
        <fullName>Protein-tyrosine phosphatase PTPL1</fullName>
    </alternativeName>
</protein>
<gene>
    <name type="primary">PTPN13</name>
    <name type="synonym">PNP1</name>
    <name type="synonym">PTP1E</name>
    <name type="synonym">PTPL1</name>
</gene>
<evidence type="ECO:0000250" key="1"/>
<evidence type="ECO:0000250" key="2">
    <source>
        <dbReference type="UniProtKB" id="Q64512"/>
    </source>
</evidence>
<evidence type="ECO:0000255" key="3"/>
<evidence type="ECO:0000255" key="4">
    <source>
        <dbReference type="PROSITE-ProRule" id="PRU00084"/>
    </source>
</evidence>
<evidence type="ECO:0000255" key="5">
    <source>
        <dbReference type="PROSITE-ProRule" id="PRU00143"/>
    </source>
</evidence>
<evidence type="ECO:0000255" key="6">
    <source>
        <dbReference type="PROSITE-ProRule" id="PRU00160"/>
    </source>
</evidence>
<evidence type="ECO:0000255" key="7">
    <source>
        <dbReference type="PROSITE-ProRule" id="PRU00709"/>
    </source>
</evidence>
<evidence type="ECO:0000256" key="8">
    <source>
        <dbReference type="SAM" id="MobiDB-lite"/>
    </source>
</evidence>
<evidence type="ECO:0000269" key="9">
    <source>
    </source>
</evidence>
<evidence type="ECO:0000269" key="10">
    <source>
    </source>
</evidence>
<evidence type="ECO:0000269" key="11">
    <source>
    </source>
</evidence>
<evidence type="ECO:0000269" key="12">
    <source>
    </source>
</evidence>
<evidence type="ECO:0000269" key="13">
    <source>
    </source>
</evidence>
<evidence type="ECO:0000269" key="14">
    <source>
    </source>
</evidence>
<evidence type="ECO:0000269" key="15">
    <source>
    </source>
</evidence>
<evidence type="ECO:0000269" key="16">
    <source>
    </source>
</evidence>
<evidence type="ECO:0000269" key="17">
    <source>
    </source>
</evidence>
<evidence type="ECO:0000269" key="18">
    <source>
    </source>
</evidence>
<evidence type="ECO:0000269" key="19">
    <source>
    </source>
</evidence>
<evidence type="ECO:0000269" key="20">
    <source>
    </source>
</evidence>
<evidence type="ECO:0000269" key="21">
    <source>
    </source>
</evidence>
<evidence type="ECO:0000269" key="22">
    <source>
    </source>
</evidence>
<evidence type="ECO:0000303" key="23">
    <source>
    </source>
</evidence>
<evidence type="ECO:0000303" key="24">
    <source>
    </source>
</evidence>
<evidence type="ECO:0000303" key="25">
    <source>
    </source>
</evidence>
<evidence type="ECO:0000303" key="26">
    <source>
    </source>
</evidence>
<evidence type="ECO:0000303" key="27">
    <source>
    </source>
</evidence>
<evidence type="ECO:0000305" key="28"/>
<evidence type="ECO:0007744" key="29">
    <source>
    </source>
</evidence>
<evidence type="ECO:0007744" key="30">
    <source>
    </source>
</evidence>
<evidence type="ECO:0007829" key="31">
    <source>
        <dbReference type="PDB" id="1D5G"/>
    </source>
</evidence>
<evidence type="ECO:0007829" key="32">
    <source>
        <dbReference type="PDB" id="1WCH"/>
    </source>
</evidence>
<evidence type="ECO:0007829" key="33">
    <source>
        <dbReference type="PDB" id="2M0Z"/>
    </source>
</evidence>
<evidence type="ECO:0007829" key="34">
    <source>
        <dbReference type="PDB" id="3LNY"/>
    </source>
</evidence>
<evidence type="ECO:0007829" key="35">
    <source>
        <dbReference type="PDB" id="5GLJ"/>
    </source>
</evidence>
<name>PTN13_HUMAN</name>
<dbReference type="EC" id="3.1.3.48" evidence="17 18"/>
<dbReference type="EMBL" id="U12128">
    <property type="protein sequence ID" value="AAB60339.1"/>
    <property type="molecule type" value="mRNA"/>
</dbReference>
<dbReference type="EMBL" id="D21209">
    <property type="protein sequence ID" value="BAA04750.1"/>
    <property type="molecule type" value="mRNA"/>
</dbReference>
<dbReference type="EMBL" id="D21210">
    <property type="protein sequence ID" value="BAA04751.1"/>
    <property type="molecule type" value="mRNA"/>
</dbReference>
<dbReference type="EMBL" id="D21211">
    <property type="protein sequence ID" value="BAA04752.1"/>
    <property type="molecule type" value="mRNA"/>
</dbReference>
<dbReference type="EMBL" id="X80289">
    <property type="protein sequence ID" value="CAA56563.1"/>
    <property type="molecule type" value="mRNA"/>
</dbReference>
<dbReference type="EMBL" id="BC039610">
    <property type="protein sequence ID" value="AAH39610.1"/>
    <property type="status" value="ALT_SEQ"/>
    <property type="molecule type" value="mRNA"/>
</dbReference>
<dbReference type="EMBL" id="BC140777">
    <property type="protein sequence ID" value="AAI40778.1"/>
    <property type="molecule type" value="mRNA"/>
</dbReference>
<dbReference type="EMBL" id="X79676">
    <property type="protein sequence ID" value="CAA56124.1"/>
    <property type="molecule type" value="mRNA"/>
</dbReference>
<dbReference type="EMBL" id="L34583">
    <property type="protein sequence ID" value="AAC41755.1"/>
    <property type="molecule type" value="mRNA"/>
</dbReference>
<dbReference type="EMBL" id="AF233323">
    <property type="protein sequence ID" value="AAF63474.1"/>
    <property type="molecule type" value="mRNA"/>
</dbReference>
<dbReference type="CCDS" id="CCDS47093.1">
    <molecule id="Q12923-4"/>
</dbReference>
<dbReference type="CCDS" id="CCDS47094.1">
    <molecule id="Q12923-1"/>
</dbReference>
<dbReference type="CCDS" id="CCDS47095.1">
    <molecule id="Q12923-3"/>
</dbReference>
<dbReference type="CCDS" id="CCDS47096.1">
    <molecule id="Q12923-2"/>
</dbReference>
<dbReference type="PIR" id="A54971">
    <property type="entry name" value="A54971"/>
</dbReference>
<dbReference type="PIR" id="I67629">
    <property type="entry name" value="I67629"/>
</dbReference>
<dbReference type="PIR" id="I67630">
    <property type="entry name" value="I67630"/>
</dbReference>
<dbReference type="RefSeq" id="NP_006255.1">
    <molecule id="Q12923-3"/>
    <property type="nucleotide sequence ID" value="NM_006264.3"/>
</dbReference>
<dbReference type="RefSeq" id="NP_542414.1">
    <molecule id="Q12923-1"/>
    <property type="nucleotide sequence ID" value="NM_080683.3"/>
</dbReference>
<dbReference type="RefSeq" id="NP_542415.1">
    <molecule id="Q12923-2"/>
    <property type="nucleotide sequence ID" value="NM_080684.3"/>
</dbReference>
<dbReference type="RefSeq" id="NP_542416.1">
    <molecule id="Q12923-4"/>
    <property type="nucleotide sequence ID" value="NM_080685.3"/>
</dbReference>
<dbReference type="PDB" id="1D5G">
    <property type="method" value="NMR"/>
    <property type="chains" value="A=1361-1456"/>
</dbReference>
<dbReference type="PDB" id="1Q7X">
    <property type="method" value="NMR"/>
    <property type="chains" value="A=1358-1459"/>
</dbReference>
<dbReference type="PDB" id="1WCH">
    <property type="method" value="X-ray"/>
    <property type="resolution" value="1.85 A"/>
    <property type="chains" value="A=2163-2477"/>
</dbReference>
<dbReference type="PDB" id="2M0Z">
    <property type="method" value="NMR"/>
    <property type="chains" value="A=1361-1456"/>
</dbReference>
<dbReference type="PDB" id="2M10">
    <property type="method" value="NMR"/>
    <property type="chains" value="A=1361-1456"/>
</dbReference>
<dbReference type="PDB" id="3LNX">
    <property type="method" value="X-ray"/>
    <property type="resolution" value="1.64 A"/>
    <property type="chains" value="A/B/C/D/E/F=1361-1456"/>
</dbReference>
<dbReference type="PDB" id="3LNY">
    <property type="method" value="X-ray"/>
    <property type="resolution" value="1.30 A"/>
    <property type="chains" value="A=1361-1456"/>
</dbReference>
<dbReference type="PDB" id="3PDZ">
    <property type="method" value="NMR"/>
    <property type="chains" value="A=1361-1456"/>
</dbReference>
<dbReference type="PDB" id="5GLJ">
    <property type="method" value="X-ray"/>
    <property type="resolution" value="1.60 A"/>
    <property type="chains" value="A/B/C/D=1086-1178"/>
</dbReference>
<dbReference type="PDB" id="7QCX">
    <property type="method" value="NMR"/>
    <property type="chains" value="A=1361-1456"/>
</dbReference>
<dbReference type="PDB" id="7QCY">
    <property type="method" value="NMR"/>
    <property type="chains" value="A=1361-1456"/>
</dbReference>
<dbReference type="PDB" id="7XTY">
    <property type="method" value="X-ray"/>
    <property type="resolution" value="2.10 A"/>
    <property type="chains" value="A/B=1362-1456"/>
</dbReference>
<dbReference type="PDBsum" id="1D5G"/>
<dbReference type="PDBsum" id="1Q7X"/>
<dbReference type="PDBsum" id="1WCH"/>
<dbReference type="PDBsum" id="2M0Z"/>
<dbReference type="PDBsum" id="2M10"/>
<dbReference type="PDBsum" id="3LNX"/>
<dbReference type="PDBsum" id="3LNY"/>
<dbReference type="PDBsum" id="3PDZ"/>
<dbReference type="PDBsum" id="5GLJ"/>
<dbReference type="PDBsum" id="7QCX"/>
<dbReference type="PDBsum" id="7QCY"/>
<dbReference type="PDBsum" id="7XTY"/>
<dbReference type="SMR" id="Q12923"/>
<dbReference type="BioGRID" id="111747">
    <property type="interactions" value="188"/>
</dbReference>
<dbReference type="CORUM" id="Q12923"/>
<dbReference type="DIP" id="DIP-40449N"/>
<dbReference type="ELM" id="Q12923"/>
<dbReference type="FunCoup" id="Q12923">
    <property type="interactions" value="1627"/>
</dbReference>
<dbReference type="IntAct" id="Q12923">
    <property type="interactions" value="77"/>
</dbReference>
<dbReference type="MINT" id="Q12923"/>
<dbReference type="STRING" id="9606.ENSP00000394794"/>
<dbReference type="BindingDB" id="Q12923"/>
<dbReference type="ChEMBL" id="CHEMBL2976"/>
<dbReference type="DEPOD" id="PTPN13"/>
<dbReference type="GlyCosmos" id="Q12923">
    <property type="glycosylation" value="2 sites, 1 glycan"/>
</dbReference>
<dbReference type="GlyGen" id="Q12923">
    <property type="glycosylation" value="3 sites, 1 O-linked glycan (2 sites)"/>
</dbReference>
<dbReference type="iPTMnet" id="Q12923"/>
<dbReference type="PhosphoSitePlus" id="Q12923"/>
<dbReference type="BioMuta" id="PTPN13"/>
<dbReference type="DMDM" id="12643716"/>
<dbReference type="jPOST" id="Q12923"/>
<dbReference type="MassIVE" id="Q12923"/>
<dbReference type="PaxDb" id="9606-ENSP00000394794"/>
<dbReference type="PeptideAtlas" id="Q12923"/>
<dbReference type="ProteomicsDB" id="59027">
    <molecule id="Q12923-1"/>
</dbReference>
<dbReference type="ProteomicsDB" id="59028">
    <molecule id="Q12923-2"/>
</dbReference>
<dbReference type="ProteomicsDB" id="59029">
    <molecule id="Q12923-3"/>
</dbReference>
<dbReference type="ProteomicsDB" id="59030">
    <molecule id="Q12923-4"/>
</dbReference>
<dbReference type="Pumba" id="Q12923"/>
<dbReference type="Antibodypedia" id="3696">
    <property type="antibodies" value="215 antibodies from 32 providers"/>
</dbReference>
<dbReference type="DNASU" id="5783"/>
<dbReference type="Ensembl" id="ENST00000316707.10">
    <molecule id="Q12923-2"/>
    <property type="protein sequence ID" value="ENSP00000322675.6"/>
    <property type="gene ID" value="ENSG00000163629.13"/>
</dbReference>
<dbReference type="Ensembl" id="ENST00000411767.7">
    <molecule id="Q12923-1"/>
    <property type="protein sequence ID" value="ENSP00000407249.2"/>
    <property type="gene ID" value="ENSG00000163629.13"/>
</dbReference>
<dbReference type="Ensembl" id="ENST00000427191.6">
    <molecule id="Q12923-3"/>
    <property type="protein sequence ID" value="ENSP00000408368.2"/>
    <property type="gene ID" value="ENSG00000163629.13"/>
</dbReference>
<dbReference type="Ensembl" id="ENST00000436978.5">
    <molecule id="Q12923-4"/>
    <property type="protein sequence ID" value="ENSP00000394794.1"/>
    <property type="gene ID" value="ENSG00000163629.13"/>
</dbReference>
<dbReference type="Ensembl" id="ENST00000511467.1">
    <molecule id="Q12923-4"/>
    <property type="protein sequence ID" value="ENSP00000426626.1"/>
    <property type="gene ID" value="ENSG00000163629.13"/>
</dbReference>
<dbReference type="GeneID" id="5783"/>
<dbReference type="KEGG" id="hsa:5783"/>
<dbReference type="MANE-Select" id="ENST00000411767.7">
    <property type="protein sequence ID" value="ENSP00000407249.2"/>
    <property type="RefSeq nucleotide sequence ID" value="NM_080683.3"/>
    <property type="RefSeq protein sequence ID" value="NP_542414.1"/>
</dbReference>
<dbReference type="UCSC" id="uc003hpy.4">
    <molecule id="Q12923-1"/>
    <property type="organism name" value="human"/>
</dbReference>
<dbReference type="AGR" id="HGNC:9646"/>
<dbReference type="CTD" id="5783"/>
<dbReference type="DisGeNET" id="5783"/>
<dbReference type="GeneCards" id="PTPN13"/>
<dbReference type="HGNC" id="HGNC:9646">
    <property type="gene designation" value="PTPN13"/>
</dbReference>
<dbReference type="HPA" id="ENSG00000163629">
    <property type="expression patterns" value="Tissue enhanced (retina)"/>
</dbReference>
<dbReference type="MIM" id="600267">
    <property type="type" value="gene"/>
</dbReference>
<dbReference type="neXtProt" id="NX_Q12923"/>
<dbReference type="OpenTargets" id="ENSG00000163629"/>
<dbReference type="PharmGKB" id="PA33988"/>
<dbReference type="VEuPathDB" id="HostDB:ENSG00000163629"/>
<dbReference type="eggNOG" id="KOG0792">
    <property type="taxonomic scope" value="Eukaryota"/>
</dbReference>
<dbReference type="GeneTree" id="ENSGT00940000155133"/>
<dbReference type="HOGENOM" id="CLU_000906_0_0_1"/>
<dbReference type="InParanoid" id="Q12923"/>
<dbReference type="OMA" id="ESPPHTI"/>
<dbReference type="OrthoDB" id="9937357at2759"/>
<dbReference type="PAN-GO" id="Q12923">
    <property type="GO annotations" value="5 GO annotations based on evolutionary models"/>
</dbReference>
<dbReference type="PhylomeDB" id="Q12923"/>
<dbReference type="TreeFam" id="TF315388"/>
<dbReference type="BRENDA" id="3.1.3.48">
    <property type="organism ID" value="2681"/>
</dbReference>
<dbReference type="PathwayCommons" id="Q12923"/>
<dbReference type="Reactome" id="R-HSA-1660499">
    <property type="pathway name" value="Synthesis of PIPs at the plasma membrane"/>
</dbReference>
<dbReference type="Reactome" id="R-HSA-9008059">
    <property type="pathway name" value="Interleukin-37 signaling"/>
</dbReference>
<dbReference type="Reactome" id="R-HSA-9696264">
    <property type="pathway name" value="RND3 GTPase cycle"/>
</dbReference>
<dbReference type="Reactome" id="R-HSA-9696270">
    <property type="pathway name" value="RND2 GTPase cycle"/>
</dbReference>
<dbReference type="Reactome" id="R-HSA-9696273">
    <property type="pathway name" value="RND1 GTPase cycle"/>
</dbReference>
<dbReference type="SignaLink" id="Q12923"/>
<dbReference type="SIGNOR" id="Q12923"/>
<dbReference type="BioGRID-ORCS" id="5783">
    <property type="hits" value="11 hits in 1167 CRISPR screens"/>
</dbReference>
<dbReference type="CD-CODE" id="8C2F96ED">
    <property type="entry name" value="Centrosome"/>
</dbReference>
<dbReference type="ChiTaRS" id="PTPN13">
    <property type="organism name" value="human"/>
</dbReference>
<dbReference type="EvolutionaryTrace" id="Q12923"/>
<dbReference type="GeneWiki" id="PTPN13"/>
<dbReference type="GenomeRNAi" id="5783"/>
<dbReference type="Pharos" id="Q12923">
    <property type="development level" value="Tchem"/>
</dbReference>
<dbReference type="PRO" id="PR:Q12923"/>
<dbReference type="Proteomes" id="UP000005640">
    <property type="component" value="Chromosome 4"/>
</dbReference>
<dbReference type="RNAct" id="Q12923">
    <property type="molecule type" value="protein"/>
</dbReference>
<dbReference type="Bgee" id="ENSG00000163629">
    <property type="expression patterns" value="Expressed in mucosa of paranasal sinus and 207 other cell types or tissues"/>
</dbReference>
<dbReference type="ExpressionAtlas" id="Q12923">
    <property type="expression patterns" value="baseline and differential"/>
</dbReference>
<dbReference type="GO" id="GO:0044297">
    <property type="term" value="C:cell body"/>
    <property type="evidence" value="ECO:0007669"/>
    <property type="project" value="Ensembl"/>
</dbReference>
<dbReference type="GO" id="GO:0005737">
    <property type="term" value="C:cytoplasm"/>
    <property type="evidence" value="ECO:0000314"/>
    <property type="project" value="UniProtKB"/>
</dbReference>
<dbReference type="GO" id="GO:0005856">
    <property type="term" value="C:cytoskeleton"/>
    <property type="evidence" value="ECO:0007669"/>
    <property type="project" value="UniProtKB-SubCell"/>
</dbReference>
<dbReference type="GO" id="GO:0070062">
    <property type="term" value="C:extracellular exosome"/>
    <property type="evidence" value="ECO:0007005"/>
    <property type="project" value="UniProtKB"/>
</dbReference>
<dbReference type="GO" id="GO:0030027">
    <property type="term" value="C:lamellipodium"/>
    <property type="evidence" value="ECO:0000314"/>
    <property type="project" value="UniProtKB"/>
</dbReference>
<dbReference type="GO" id="GO:0005654">
    <property type="term" value="C:nucleoplasm"/>
    <property type="evidence" value="ECO:0000304"/>
    <property type="project" value="Reactome"/>
</dbReference>
<dbReference type="GO" id="GO:0005634">
    <property type="term" value="C:nucleus"/>
    <property type="evidence" value="ECO:0000314"/>
    <property type="project" value="UniProtKB"/>
</dbReference>
<dbReference type="GO" id="GO:0005886">
    <property type="term" value="C:plasma membrane"/>
    <property type="evidence" value="ECO:0000314"/>
    <property type="project" value="UniProtKB"/>
</dbReference>
<dbReference type="GO" id="GO:0036312">
    <property type="term" value="F:phosphatidylinositol 3-kinase regulatory subunit binding"/>
    <property type="evidence" value="ECO:0000353"/>
    <property type="project" value="UniProtKB"/>
</dbReference>
<dbReference type="GO" id="GO:0004725">
    <property type="term" value="F:protein tyrosine phosphatase activity"/>
    <property type="evidence" value="ECO:0000314"/>
    <property type="project" value="UniProtKB"/>
</dbReference>
<dbReference type="GO" id="GO:0097237">
    <property type="term" value="P:cellular response to toxic substance"/>
    <property type="evidence" value="ECO:0007669"/>
    <property type="project" value="Ensembl"/>
</dbReference>
<dbReference type="GO" id="GO:1904890">
    <property type="term" value="P:negative regulation of excitatory synapse assembly"/>
    <property type="evidence" value="ECO:0000318"/>
    <property type="project" value="GO_Central"/>
</dbReference>
<dbReference type="GO" id="GO:0001933">
    <property type="term" value="P:negative regulation of protein phosphorylation"/>
    <property type="evidence" value="ECO:0000315"/>
    <property type="project" value="UniProtKB"/>
</dbReference>
<dbReference type="GO" id="GO:0035335">
    <property type="term" value="P:peptidyl-tyrosine dephosphorylation"/>
    <property type="evidence" value="ECO:0000315"/>
    <property type="project" value="UniProtKB"/>
</dbReference>
<dbReference type="GO" id="GO:0006470">
    <property type="term" value="P:protein dephosphorylation"/>
    <property type="evidence" value="ECO:0000314"/>
    <property type="project" value="UniProtKB"/>
</dbReference>
<dbReference type="GO" id="GO:0051896">
    <property type="term" value="P:regulation of phosphatidylinositol 3-kinase/protein kinase B signal transduction"/>
    <property type="evidence" value="ECO:0000314"/>
    <property type="project" value="UniProtKB"/>
</dbReference>
<dbReference type="CDD" id="cd14473">
    <property type="entry name" value="FERM_B-lobe"/>
    <property type="match status" value="1"/>
</dbReference>
<dbReference type="CDD" id="cd17195">
    <property type="entry name" value="FERM_F1_PTPN13"/>
    <property type="match status" value="1"/>
</dbReference>
<dbReference type="CDD" id="cd23072">
    <property type="entry name" value="PDZ1_PTPN13-like"/>
    <property type="match status" value="1"/>
</dbReference>
<dbReference type="CDD" id="cd06792">
    <property type="entry name" value="PDZ2-PTPN13_FRMPD2-like"/>
    <property type="match status" value="1"/>
</dbReference>
<dbReference type="CDD" id="cd06695">
    <property type="entry name" value="PDZ3_PTPN13_FRMPD2-like"/>
    <property type="match status" value="1"/>
</dbReference>
<dbReference type="CDD" id="cd06696">
    <property type="entry name" value="PDZ4_PTPN13-like"/>
    <property type="match status" value="1"/>
</dbReference>
<dbReference type="CDD" id="cd06697">
    <property type="entry name" value="PDZ5_PTPN13-like"/>
    <property type="match status" value="1"/>
</dbReference>
<dbReference type="CDD" id="cd14597">
    <property type="entry name" value="PTPc-N13"/>
    <property type="match status" value="1"/>
</dbReference>
<dbReference type="FunFam" id="1.10.510.10:FF:000242">
    <property type="entry name" value="Tyrosine-protein phosphatase non-receptor type 13"/>
    <property type="match status" value="1"/>
</dbReference>
<dbReference type="FunFam" id="1.20.80.10:FF:000011">
    <property type="entry name" value="Tyrosine-protein phosphatase non-receptor type 13"/>
    <property type="match status" value="1"/>
</dbReference>
<dbReference type="FunFam" id="2.30.29.30:FF:000107">
    <property type="entry name" value="Tyrosine-protein phosphatase non-receptor type 13"/>
    <property type="match status" value="1"/>
</dbReference>
<dbReference type="FunFam" id="2.30.42.10:FF:000084">
    <property type="entry name" value="Tyrosine-protein phosphatase non-receptor type 13"/>
    <property type="match status" value="1"/>
</dbReference>
<dbReference type="FunFam" id="2.30.42.10:FF:000086">
    <property type="entry name" value="Tyrosine-protein phosphatase non-receptor type 13"/>
    <property type="match status" value="1"/>
</dbReference>
<dbReference type="FunFam" id="2.30.42.10:FF:000105">
    <property type="entry name" value="Tyrosine-protein phosphatase non-receptor type 13"/>
    <property type="match status" value="1"/>
</dbReference>
<dbReference type="FunFam" id="2.30.42.10:FF:000129">
    <property type="entry name" value="Tyrosine-protein phosphatase non-receptor type 13"/>
    <property type="match status" value="1"/>
</dbReference>
<dbReference type="FunFam" id="2.30.42.10:FF:000174">
    <property type="entry name" value="Tyrosine-protein phosphatase non-receptor type 13"/>
    <property type="match status" value="1"/>
</dbReference>
<dbReference type="FunFam" id="3.10.20.90:FF:000082">
    <property type="entry name" value="Tyrosine-protein phosphatase non-receptor type 13"/>
    <property type="match status" value="1"/>
</dbReference>
<dbReference type="FunFam" id="3.90.190.10:FF:000034">
    <property type="entry name" value="Tyrosine-protein phosphatase non-receptor type 13"/>
    <property type="match status" value="1"/>
</dbReference>
<dbReference type="Gene3D" id="1.20.80.10">
    <property type="match status" value="1"/>
</dbReference>
<dbReference type="Gene3D" id="2.30.42.10">
    <property type="match status" value="5"/>
</dbReference>
<dbReference type="Gene3D" id="3.10.20.90">
    <property type="entry name" value="Phosphatidylinositol 3-kinase Catalytic Subunit, Chain A, domain 1"/>
    <property type="match status" value="1"/>
</dbReference>
<dbReference type="Gene3D" id="2.30.29.30">
    <property type="entry name" value="Pleckstrin-homology domain (PH domain)/Phosphotyrosine-binding domain (PTB)"/>
    <property type="match status" value="1"/>
</dbReference>
<dbReference type="Gene3D" id="3.90.190.10">
    <property type="entry name" value="Protein tyrosine phosphatase superfamily"/>
    <property type="match status" value="1"/>
</dbReference>
<dbReference type="Gene3D" id="1.10.510.10">
    <property type="entry name" value="Transferase(Phosphotransferase) domain 1"/>
    <property type="match status" value="1"/>
</dbReference>
<dbReference type="InterPro" id="IPR019749">
    <property type="entry name" value="Band_41_domain"/>
</dbReference>
<dbReference type="InterPro" id="IPR014352">
    <property type="entry name" value="FERM/acyl-CoA-bd_prot_sf"/>
</dbReference>
<dbReference type="InterPro" id="IPR035963">
    <property type="entry name" value="FERM_2"/>
</dbReference>
<dbReference type="InterPro" id="IPR019748">
    <property type="entry name" value="FERM_central"/>
</dbReference>
<dbReference type="InterPro" id="IPR000299">
    <property type="entry name" value="FERM_domain"/>
</dbReference>
<dbReference type="InterPro" id="IPR018979">
    <property type="entry name" value="FERM_N"/>
</dbReference>
<dbReference type="InterPro" id="IPR018980">
    <property type="entry name" value="FERM_PH-like_C"/>
</dbReference>
<dbReference type="InterPro" id="IPR011019">
    <property type="entry name" value="KIND_dom"/>
</dbReference>
<dbReference type="InterPro" id="IPR052074">
    <property type="entry name" value="NonRcpt_TyrProt_Phosphatase"/>
</dbReference>
<dbReference type="InterPro" id="IPR001478">
    <property type="entry name" value="PDZ"/>
</dbReference>
<dbReference type="InterPro" id="IPR036034">
    <property type="entry name" value="PDZ_sf"/>
</dbReference>
<dbReference type="InterPro" id="IPR011993">
    <property type="entry name" value="PH-like_dom_sf"/>
</dbReference>
<dbReference type="InterPro" id="IPR029021">
    <property type="entry name" value="Prot-tyrosine_phosphatase-like"/>
</dbReference>
<dbReference type="InterPro" id="IPR000242">
    <property type="entry name" value="PTP_cat"/>
</dbReference>
<dbReference type="InterPro" id="IPR012153">
    <property type="entry name" value="PTPN13"/>
</dbReference>
<dbReference type="InterPro" id="IPR003595">
    <property type="entry name" value="Tyr_Pase_cat"/>
</dbReference>
<dbReference type="InterPro" id="IPR000387">
    <property type="entry name" value="Tyr_Pase_dom"/>
</dbReference>
<dbReference type="InterPro" id="IPR029071">
    <property type="entry name" value="Ubiquitin-like_domsf"/>
</dbReference>
<dbReference type="PANTHER" id="PTHR46900">
    <property type="entry name" value="TYROSINE-PROTEIN PHOSPHATASE NON-RECEPTOR TYPE 13"/>
    <property type="match status" value="1"/>
</dbReference>
<dbReference type="PANTHER" id="PTHR46900:SF1">
    <property type="entry name" value="TYROSINE-PROTEIN PHOSPHATASE NON-RECEPTOR TYPE 13"/>
    <property type="match status" value="1"/>
</dbReference>
<dbReference type="Pfam" id="PF09380">
    <property type="entry name" value="FERM_C"/>
    <property type="match status" value="1"/>
</dbReference>
<dbReference type="Pfam" id="PF00373">
    <property type="entry name" value="FERM_M"/>
    <property type="match status" value="1"/>
</dbReference>
<dbReference type="Pfam" id="PF09379">
    <property type="entry name" value="FERM_N"/>
    <property type="match status" value="1"/>
</dbReference>
<dbReference type="Pfam" id="PF00595">
    <property type="entry name" value="PDZ"/>
    <property type="match status" value="5"/>
</dbReference>
<dbReference type="Pfam" id="PF16599">
    <property type="entry name" value="PTN13_u3"/>
    <property type="match status" value="1"/>
</dbReference>
<dbReference type="Pfam" id="PF00102">
    <property type="entry name" value="Y_phosphatase"/>
    <property type="match status" value="1"/>
</dbReference>
<dbReference type="PIRSF" id="PIRSF000933">
    <property type="entry name" value="Tyr-Ptase_nr13"/>
    <property type="match status" value="1"/>
</dbReference>
<dbReference type="PRINTS" id="PR00935">
    <property type="entry name" value="BAND41"/>
</dbReference>
<dbReference type="PRINTS" id="PR00700">
    <property type="entry name" value="PRTYPHPHTASE"/>
</dbReference>
<dbReference type="SMART" id="SM00295">
    <property type="entry name" value="B41"/>
    <property type="match status" value="1"/>
</dbReference>
<dbReference type="SMART" id="SM01196">
    <property type="entry name" value="FERM_C"/>
    <property type="match status" value="1"/>
</dbReference>
<dbReference type="SMART" id="SM00750">
    <property type="entry name" value="KIND"/>
    <property type="match status" value="1"/>
</dbReference>
<dbReference type="SMART" id="SM00228">
    <property type="entry name" value="PDZ"/>
    <property type="match status" value="5"/>
</dbReference>
<dbReference type="SMART" id="SM00194">
    <property type="entry name" value="PTPc"/>
    <property type="match status" value="1"/>
</dbReference>
<dbReference type="SMART" id="SM00404">
    <property type="entry name" value="PTPc_motif"/>
    <property type="match status" value="1"/>
</dbReference>
<dbReference type="SUPFAM" id="SSF52799">
    <property type="entry name" value="(Phosphotyrosine protein) phosphatases II"/>
    <property type="match status" value="1"/>
</dbReference>
<dbReference type="SUPFAM" id="SSF50156">
    <property type="entry name" value="PDZ domain-like"/>
    <property type="match status" value="5"/>
</dbReference>
<dbReference type="SUPFAM" id="SSF50729">
    <property type="entry name" value="PH domain-like"/>
    <property type="match status" value="1"/>
</dbReference>
<dbReference type="SUPFAM" id="SSF47031">
    <property type="entry name" value="Second domain of FERM"/>
    <property type="match status" value="1"/>
</dbReference>
<dbReference type="SUPFAM" id="SSF54236">
    <property type="entry name" value="Ubiquitin-like"/>
    <property type="match status" value="1"/>
</dbReference>
<dbReference type="PROSITE" id="PS50057">
    <property type="entry name" value="FERM_3"/>
    <property type="match status" value="1"/>
</dbReference>
<dbReference type="PROSITE" id="PS51377">
    <property type="entry name" value="KIND"/>
    <property type="match status" value="1"/>
</dbReference>
<dbReference type="PROSITE" id="PS50106">
    <property type="entry name" value="PDZ"/>
    <property type="match status" value="5"/>
</dbReference>
<dbReference type="PROSITE" id="PS50056">
    <property type="entry name" value="TYR_PHOSPHATASE_2"/>
    <property type="match status" value="1"/>
</dbReference>
<dbReference type="PROSITE" id="PS50055">
    <property type="entry name" value="TYR_PHOSPHATASE_PTP"/>
    <property type="match status" value="1"/>
</dbReference>
<feature type="chain" id="PRO_0000219435" description="Tyrosine-protein phosphatase non-receptor type 13">
    <location>
        <begin position="1"/>
        <end position="2485"/>
    </location>
</feature>
<feature type="domain" description="KIND" evidence="7">
    <location>
        <begin position="3"/>
        <end position="190"/>
    </location>
</feature>
<feature type="domain" description="FERM" evidence="4">
    <location>
        <begin position="572"/>
        <end position="872"/>
    </location>
</feature>
<feature type="domain" description="PDZ 1" evidence="5">
    <location>
        <begin position="1093"/>
        <end position="1178"/>
    </location>
</feature>
<feature type="domain" description="PDZ 2" evidence="5">
    <location>
        <begin position="1368"/>
        <end position="1452"/>
    </location>
</feature>
<feature type="domain" description="PDZ 3" evidence="5">
    <location>
        <begin position="1501"/>
        <end position="1588"/>
    </location>
</feature>
<feature type="domain" description="PDZ 4" evidence="5">
    <location>
        <begin position="1788"/>
        <end position="1868"/>
    </location>
</feature>
<feature type="domain" description="PDZ 5" evidence="5">
    <location>
        <begin position="1882"/>
        <end position="1965"/>
    </location>
</feature>
<feature type="domain" description="Tyrosine-protein phosphatase" evidence="6">
    <location>
        <begin position="2213"/>
        <end position="2467"/>
    </location>
</feature>
<feature type="region of interest" description="Disordered" evidence="8">
    <location>
        <begin position="186"/>
        <end position="220"/>
    </location>
</feature>
<feature type="region of interest" description="Disordered" evidence="8">
    <location>
        <begin position="260"/>
        <end position="283"/>
    </location>
</feature>
<feature type="region of interest" description="Disordered" evidence="8">
    <location>
        <begin position="433"/>
        <end position="467"/>
    </location>
</feature>
<feature type="region of interest" description="Disordered" evidence="8">
    <location>
        <begin position="947"/>
        <end position="975"/>
    </location>
</feature>
<feature type="region of interest" description="Disordered" evidence="8">
    <location>
        <begin position="995"/>
        <end position="1049"/>
    </location>
</feature>
<feature type="region of interest" description="Disordered" evidence="8">
    <location>
        <begin position="1227"/>
        <end position="1258"/>
    </location>
</feature>
<feature type="region of interest" description="Disordered" evidence="8">
    <location>
        <begin position="1273"/>
        <end position="1362"/>
    </location>
</feature>
<feature type="region of interest" description="Disordered" evidence="8">
    <location>
        <begin position="1608"/>
        <end position="1665"/>
    </location>
</feature>
<feature type="region of interest" description="Disordered" evidence="8">
    <location>
        <begin position="1715"/>
        <end position="1751"/>
    </location>
</feature>
<feature type="region of interest" description="Disordered" evidence="8">
    <location>
        <begin position="1971"/>
        <end position="1996"/>
    </location>
</feature>
<feature type="region of interest" description="Substrate">
    <location>
        <begin position="2408"/>
        <end position="2414"/>
    </location>
</feature>
<feature type="coiled-coil region" evidence="3">
    <location>
        <begin position="469"/>
        <end position="504"/>
    </location>
</feature>
<feature type="compositionally biased region" description="Basic and acidic residues" evidence="8">
    <location>
        <begin position="192"/>
        <end position="205"/>
    </location>
</feature>
<feature type="compositionally biased region" description="Polar residues" evidence="8">
    <location>
        <begin position="270"/>
        <end position="279"/>
    </location>
</feature>
<feature type="compositionally biased region" description="Polar residues" evidence="8">
    <location>
        <begin position="452"/>
        <end position="465"/>
    </location>
</feature>
<feature type="compositionally biased region" description="Basic and acidic residues" evidence="8">
    <location>
        <begin position="950"/>
        <end position="971"/>
    </location>
</feature>
<feature type="compositionally biased region" description="Polar residues" evidence="8">
    <location>
        <begin position="1020"/>
        <end position="1032"/>
    </location>
</feature>
<feature type="compositionally biased region" description="Basic and acidic residues" evidence="8">
    <location>
        <begin position="1033"/>
        <end position="1042"/>
    </location>
</feature>
<feature type="compositionally biased region" description="Polar residues" evidence="8">
    <location>
        <begin position="1243"/>
        <end position="1258"/>
    </location>
</feature>
<feature type="compositionally biased region" description="Polar residues" evidence="8">
    <location>
        <begin position="1273"/>
        <end position="1288"/>
    </location>
</feature>
<feature type="compositionally biased region" description="Polar residues" evidence="8">
    <location>
        <begin position="1327"/>
        <end position="1359"/>
    </location>
</feature>
<feature type="compositionally biased region" description="Polar residues" evidence="8">
    <location>
        <begin position="1608"/>
        <end position="1630"/>
    </location>
</feature>
<feature type="compositionally biased region" description="Low complexity" evidence="8">
    <location>
        <begin position="1736"/>
        <end position="1749"/>
    </location>
</feature>
<feature type="compositionally biased region" description="Polar residues" evidence="8">
    <location>
        <begin position="1973"/>
        <end position="1996"/>
    </location>
</feature>
<feature type="active site" description="Phosphocysteine intermediate" evidence="28">
    <location>
        <position position="2408"/>
    </location>
</feature>
<feature type="binding site">
    <location>
        <position position="2378"/>
    </location>
    <ligand>
        <name>substrate</name>
    </ligand>
</feature>
<feature type="binding site" evidence="1">
    <location>
        <begin position="2408"/>
        <end position="2414"/>
    </location>
    <ligand>
        <name>substrate</name>
    </ligand>
</feature>
<feature type="binding site" evidence="1">
    <location>
        <position position="2452"/>
    </location>
    <ligand>
        <name>substrate</name>
    </ligand>
</feature>
<feature type="modified residue" description="Phosphoserine" evidence="30">
    <location>
        <position position="240"/>
    </location>
</feature>
<feature type="modified residue" description="Phosphoserine" evidence="2">
    <location>
        <position position="301"/>
    </location>
</feature>
<feature type="modified residue" description="Phosphoserine" evidence="2">
    <location>
        <position position="302"/>
    </location>
</feature>
<feature type="modified residue" description="Phosphoserine" evidence="30">
    <location>
        <position position="890"/>
    </location>
</feature>
<feature type="modified residue" description="Phosphoserine" evidence="2">
    <location>
        <position position="897"/>
    </location>
</feature>
<feature type="modified residue" description="Phosphoserine" evidence="30">
    <location>
        <position position="908"/>
    </location>
</feature>
<feature type="modified residue" description="Phosphoserine" evidence="2">
    <location>
        <position position="911"/>
    </location>
</feature>
<feature type="modified residue" description="Phosphoserine" evidence="2">
    <location>
        <position position="914"/>
    </location>
</feature>
<feature type="modified residue" description="Phosphoserine" evidence="29">
    <location>
        <position position="1029"/>
    </location>
</feature>
<feature type="modified residue" description="Phosphoserine" evidence="29">
    <location>
        <position position="1033"/>
    </location>
</feature>
<feature type="modified residue" description="Phosphoserine" evidence="30">
    <location>
        <position position="1085"/>
    </location>
</feature>
<feature type="splice variant" id="VSP_000496" description="In isoform 2." evidence="27">
    <location>
        <begin position="884"/>
        <end position="1074"/>
    </location>
</feature>
<feature type="splice variant" id="VSP_000497" description="In isoform 3." evidence="23 25 27">
    <location>
        <begin position="1056"/>
        <end position="1074"/>
    </location>
</feature>
<feature type="splice variant" id="VSP_007921" description="In isoform 4." evidence="24 26">
    <original>T</original>
    <variation>TVLFDK</variation>
    <location>
        <position position="1383"/>
    </location>
</feature>
<feature type="sequence variant" id="VAR_048359" description="In dbSNP:rs10033029.">
    <original>F</original>
    <variation>L</variation>
    <location>
        <position position="1356"/>
    </location>
</feature>
<feature type="sequence variant" id="VAR_016200" description="In dbSNP:rs749353184." evidence="15">
    <original>L</original>
    <variation>P</variation>
    <location>
        <position position="1419"/>
    </location>
</feature>
<feature type="sequence variant" id="VAR_016201" description="In dbSNP:rs2230600." evidence="15">
    <original>I</original>
    <variation>M</variation>
    <location>
        <position position="1522"/>
    </location>
</feature>
<feature type="sequence variant" id="VAR_024373" description="In dbSNP:rs12500797.">
    <original>E</original>
    <variation>K</variation>
    <location>
        <position position="1625"/>
    </location>
</feature>
<feature type="sequence variant" id="VAR_048360" description="In dbSNP:rs17012064.">
    <original>S</original>
    <variation>P</variation>
    <location>
        <position position="1744"/>
    </location>
</feature>
<feature type="sequence variant" id="VAR_024374" description="In dbSNP:rs989902.">
    <original>Y</original>
    <variation>D</variation>
    <location>
        <position position="2081"/>
    </location>
</feature>
<feature type="sequence variant" id="VAR_048361" description="No effect on substrate affinity; dbSNP:rs34226837." evidence="17">
    <original>I</original>
    <variation>V</variation>
    <location>
        <position position="2458"/>
    </location>
</feature>
<feature type="mutagenesis site" description="No effect on substrate affinity." evidence="17">
    <original>D</original>
    <variation>H</variation>
    <location>
        <position position="2154"/>
    </location>
</feature>
<feature type="mutagenesis site" description="No effect on substrate affinity." evidence="17">
    <original>R</original>
    <variation>W</variation>
    <location>
        <position position="2205"/>
    </location>
</feature>
<feature type="mutagenesis site" description="Reduces substrate affinity 2 fold." evidence="17">
    <original>Q</original>
    <variation>M</variation>
    <location>
        <position position="2221"/>
    </location>
</feature>
<feature type="mutagenesis site" description="Reduces substrate affinity 7 fold." evidence="17">
    <original>M</original>
    <variation>T</variation>
    <location>
        <position position="2307"/>
    </location>
</feature>
<feature type="mutagenesis site" description="Loss of catalytic activity." evidence="17">
    <original>C</original>
    <variation>S</variation>
    <location>
        <position position="2408"/>
    </location>
</feature>
<feature type="mutagenesis site" description="Loss of catalytic activity." evidence="17">
    <original>R</original>
    <variation>E</variation>
    <location>
        <position position="2444"/>
    </location>
</feature>
<feature type="mutagenesis site" description="Reduces substrate affinity 7 fold." evidence="17">
    <original>R</original>
    <variation>K</variation>
    <location>
        <position position="2444"/>
    </location>
</feature>
<feature type="mutagenesis site" description="Strongly decreases catalytic activity." evidence="17">
    <original>R</original>
    <variation>Q</variation>
    <location>
        <position position="2444"/>
    </location>
</feature>
<feature type="mutagenesis site" description="Reduces substrate affinity 2 fold." evidence="17">
    <original>H</original>
    <variation>A</variation>
    <location>
        <position position="2448"/>
    </location>
</feature>
<feature type="mutagenesis site" description="Loss of catalytic activity." evidence="17">
    <original>G</original>
    <variation>V</variation>
    <location>
        <position position="2449"/>
    </location>
</feature>
<feature type="mutagenesis site" description="No effect on substrate affinity." evidence="17">
    <original>E</original>
    <variation>D</variation>
    <location>
        <position position="2474"/>
    </location>
</feature>
<feature type="sequence conflict" description="In Ref. 3; CAA56563." evidence="28" ref="3">
    <original>LD</original>
    <variation>FH</variation>
    <location>
        <begin position="1134"/>
        <end position="1135"/>
    </location>
</feature>
<feature type="sequence conflict" description="In Ref. 5." evidence="28" ref="5">
    <original>KDHHWSRGTLRHIS</original>
    <variation>DLSRSHCHVYLAHL</variation>
    <location>
        <begin position="1216"/>
        <end position="1229"/>
    </location>
</feature>
<feature type="sequence conflict" description="In Ref. 5; CAA56124." evidence="28" ref="5">
    <original>GL</original>
    <variation>A</variation>
    <location>
        <begin position="1238"/>
        <end position="1239"/>
    </location>
</feature>
<feature type="sequence conflict" description="In Ref. 5; CAA56124." evidence="28" ref="5">
    <original>S</original>
    <variation>P</variation>
    <location>
        <position position="1357"/>
    </location>
</feature>
<feature type="sequence conflict" description="In Ref. 5; CAA56124." evidence="28" ref="5">
    <original>KP</original>
    <variation>RS</variation>
    <location>
        <begin position="1362"/>
        <end position="1363"/>
    </location>
</feature>
<feature type="sequence conflict" description="In Ref. 3; CAA56563." evidence="28" ref="3">
    <original>P</original>
    <variation>A</variation>
    <location>
        <position position="1538"/>
    </location>
</feature>
<feature type="sequence conflict" description="In Ref. 5; CAA56124." evidence="28" ref="5">
    <original>R</original>
    <variation>K</variation>
    <location>
        <position position="1649"/>
    </location>
</feature>
<feature type="sequence conflict" description="In Ref. 5; CAA56124." evidence="28" ref="5">
    <original>KSQEDTICTMFYYPQKI</original>
    <variation>RVKKIPFVPCFTILRKR</variation>
    <location>
        <begin position="1698"/>
        <end position="1714"/>
    </location>
</feature>
<feature type="sequence conflict" description="In Ref. 3; CAA56563." evidence="28" ref="3">
    <original>G</original>
    <variation>A</variation>
    <location>
        <position position="1797"/>
    </location>
</feature>
<feature type="sequence conflict" description="In Ref. 5; CAA56124." evidence="28" ref="5">
    <original>AA</original>
    <variation>G</variation>
    <location>
        <begin position="1856"/>
        <end position="1857"/>
    </location>
</feature>
<feature type="sequence conflict" description="In Ref. 5; CAA56124." evidence="28" ref="5">
    <original>A</original>
    <variation>S</variation>
    <location>
        <position position="2069"/>
    </location>
</feature>
<feature type="sequence conflict" description="In Ref. 5; CAA56124." evidence="28" ref="5">
    <original>GLLDQ</original>
    <variation>VARS</variation>
    <location>
        <begin position="2206"/>
        <end position="2210"/>
    </location>
</feature>
<feature type="strand" evidence="35">
    <location>
        <begin position="1090"/>
        <end position="1097"/>
    </location>
</feature>
<feature type="turn" evidence="35">
    <location>
        <begin position="1100"/>
        <end position="1102"/>
    </location>
</feature>
<feature type="strand" evidence="35">
    <location>
        <begin position="1105"/>
        <end position="1109"/>
    </location>
</feature>
<feature type="strand" evidence="35">
    <location>
        <begin position="1122"/>
        <end position="1126"/>
    </location>
</feature>
<feature type="helix" evidence="35">
    <location>
        <begin position="1131"/>
        <end position="1135"/>
    </location>
</feature>
<feature type="strand" evidence="35">
    <location>
        <begin position="1143"/>
        <end position="1147"/>
    </location>
</feature>
<feature type="helix" evidence="35">
    <location>
        <begin position="1157"/>
        <end position="1166"/>
    </location>
</feature>
<feature type="strand" evidence="35">
    <location>
        <begin position="1169"/>
        <end position="1177"/>
    </location>
</feature>
<feature type="strand" evidence="34">
    <location>
        <begin position="1366"/>
        <end position="1372"/>
    </location>
</feature>
<feature type="strand" evidence="31">
    <location>
        <begin position="1374"/>
        <end position="1377"/>
    </location>
</feature>
<feature type="strand" evidence="34">
    <location>
        <begin position="1379"/>
        <end position="1384"/>
    </location>
</feature>
<feature type="strand" evidence="33">
    <location>
        <begin position="1385"/>
        <end position="1387"/>
    </location>
</feature>
<feature type="strand" evidence="34">
    <location>
        <begin position="1388"/>
        <end position="1390"/>
    </location>
</feature>
<feature type="helix" evidence="34">
    <location>
        <begin position="1391"/>
        <end position="1393"/>
    </location>
</feature>
<feature type="strand" evidence="34">
    <location>
        <begin position="1395"/>
        <end position="1400"/>
    </location>
</feature>
<feature type="helix" evidence="34">
    <location>
        <begin position="1405"/>
        <end position="1409"/>
    </location>
</feature>
<feature type="strand" evidence="34">
    <location>
        <begin position="1417"/>
        <end position="1421"/>
    </location>
</feature>
<feature type="helix" evidence="34">
    <location>
        <begin position="1431"/>
        <end position="1439"/>
    </location>
</feature>
<feature type="strand" evidence="34">
    <location>
        <begin position="1443"/>
        <end position="1450"/>
    </location>
</feature>
<feature type="helix" evidence="32">
    <location>
        <begin position="2175"/>
        <end position="2179"/>
    </location>
</feature>
<feature type="strand" evidence="32">
    <location>
        <begin position="2188"/>
        <end position="2190"/>
    </location>
</feature>
<feature type="helix" evidence="32">
    <location>
        <begin position="2194"/>
        <end position="2209"/>
    </location>
</feature>
<feature type="helix" evidence="32">
    <location>
        <begin position="2212"/>
        <end position="2220"/>
    </location>
</feature>
<feature type="helix" evidence="32">
    <location>
        <begin position="2231"/>
        <end position="2233"/>
    </location>
</feature>
<feature type="helix" evidence="32">
    <location>
        <begin position="2235"/>
        <end position="2238"/>
    </location>
</feature>
<feature type="turn" evidence="32">
    <location>
        <begin position="2257"/>
        <end position="2260"/>
    </location>
</feature>
<feature type="strand" evidence="32">
    <location>
        <begin position="2264"/>
        <end position="2272"/>
    </location>
</feature>
<feature type="strand" evidence="32">
    <location>
        <begin position="2275"/>
        <end position="2282"/>
    </location>
</feature>
<feature type="helix" evidence="32">
    <location>
        <begin position="2287"/>
        <end position="2289"/>
    </location>
</feature>
<feature type="helix" evidence="32">
    <location>
        <begin position="2290"/>
        <end position="2299"/>
    </location>
</feature>
<feature type="strand" evidence="32">
    <location>
        <begin position="2304"/>
        <end position="2307"/>
    </location>
</feature>
<feature type="strand" evidence="32">
    <location>
        <begin position="2311"/>
        <end position="2313"/>
    </location>
</feature>
<feature type="strand" evidence="32">
    <location>
        <begin position="2331"/>
        <end position="2346"/>
    </location>
</feature>
<feature type="strand" evidence="32">
    <location>
        <begin position="2348"/>
        <end position="2359"/>
    </location>
</feature>
<feature type="turn" evidence="32">
    <location>
        <begin position="2360"/>
        <end position="2363"/>
    </location>
</feature>
<feature type="strand" evidence="32">
    <location>
        <begin position="2364"/>
        <end position="2373"/>
    </location>
</feature>
<feature type="helix" evidence="32">
    <location>
        <begin position="2385"/>
        <end position="2398"/>
    </location>
</feature>
<feature type="strand" evidence="32">
    <location>
        <begin position="2404"/>
        <end position="2407"/>
    </location>
</feature>
<feature type="strand" evidence="32">
    <location>
        <begin position="2409"/>
        <end position="2412"/>
    </location>
</feature>
<feature type="helix" evidence="32">
    <location>
        <begin position="2413"/>
        <end position="2429"/>
    </location>
</feature>
<feature type="helix" evidence="32">
    <location>
        <begin position="2436"/>
        <end position="2444"/>
    </location>
</feature>
<feature type="helix" evidence="32">
    <location>
        <begin position="2454"/>
        <end position="2475"/>
    </location>
</feature>
<sequence>MHVSLAEALEVRGGPLQEEEIWAVLNQSAESLQELFRKVSLADPAALGFIISPWSLLLLPSGSVSFTDENISNQDLRAFTAPEVLQNQSLTSLSDVEKIHIYSLGMTLYWGADYEVPQSQPIKLGDHLNSILLGMCEDVIYARVSVRTVLDACSAHIRNSNCAPSFSYVKHLVKLVLGNLSGTDQLSCNSEQKPDRSQAIRDRLRGKGLPTGRSSTSDVLDIQKPPLSHQTFLNKGLSKSMGFLSIKDTQDENYFKDILSDNSGREDSENTFSPYQFKTSGPEKKPIPGIDVLSKKKIWASSMDLLCTADRDFSSGETATYRRCHPEAVTVRTSTTPRKKEARYSDGSIALDIFGPQKMDPIYHTRELPTSSAISSALDRIRERQKKLQVLREAMNVEEPVRRYKTYHGDVFSTSSESPSIISSESDFRQVRRSEASKRFESSSGLPGVDETLSQGQSQRPSRQYETPFEGNLINQEIMLKRQEEELMQLQAKMALRQSRLSLYPGDTIKASMLDITRDPLREIALETAMTQRKLRNFFGPEFVKMTIEPFISLDLPRSILTKKGKNEDNRRKVNIMLLNGQRLELTCDTKTICKDVFDMVVAHIGLVEHHLFALATLKDNEYFFVDPDLKLTKVAPEGWKEEPKKKTKATVNFTLFFRIKFFMDDVSLIQHTLTCHQYYLQLRKDILEERMHCDDETSLLLASLALQAEYGDYQPEVHGVSYFRMEHYLPARVMEKLDLSYIKEELPKLHNTYVGASEKETELEFLKVCQRLTEYGVHFHRVHPEKKSQTGILLGVCSKGVLVFEVHNGVRTLVLRFPWRETKKISFSKKKITLQNTSDGIKHGFQTDNSKICQYLLHLCSYQHKFQLQMRARQSNQDAQDIERASFRSLNLQAESVRGFNMGRAISTGSLASSTLNKLAVRPLSVQAEILKRLSCSELSLYQPLQNSSKEKNDKASWEEKPREMSKSYHDLSQASLYPHRKNVIVNMEPPPQTVAELVGKPSHQMSRSDAESLAGVTKLNNSKSVASLNRSPERRKHESDSSSIEDPGQAYVLGMTMHSSGNSSSQVPLKENDVLHKRWSIVSSPEREITLVNLKKDAKYGLGFQIIGGEKMGRLDLGIFISSVAPGGPADLDGCLKPGDRLISVNSVSLEGVSHHAAIEILQNAPEDVTLVISQPKEKISKVPSTPVHLTNEMKNYMKKSSYMQDSAIDSSSKDHHWSRGTLRHISENSFGPSGGLREGSLSSQDSRTESASLSQSQVNGFFASHLGDQTWQESQHGSPSPSVISKATEKETFTDSNQSKTKKPGISDVTDYSDRGDSDMDEATYSSSQDHQTPKQESSSSVNTSNKMNFKTFSSSPPKPGDIFEVELAKNDNSLGISVTGGVNTSVRHGGIYVKAVIPQGAAESDGRIHKGDRVLAVNGVSLEGATHKQAVETLRNTGQVVHLLLEKGQSPTSKEHVPVTPQCTLSDQNAQGQGPEKVKKTTQVKDYSFVTEENTFEVKLFKNSSGLGFSFSREDNLIPEQINASIVRVKKLFPGQPAAESGKIDVGDVILKVNGASLKGLSQQEVISALRGTAPEVFLLLCRPPPGVLPEIDTALLTPLQSPAQVLPNSSKDSSQPSCVEQSTSSDENEMSDKSKKQCKSPSRRDSYSDSSGSGEDDLVTAPANISNSTWSSALHQTLSNMVSQAQSHHEAPKSQEDTICTMFYYPQKIPNKPEFEDSNPSPLPPDMAPGQSYQPQSESASSSSMDKYHIHHISEPTRQENWTPLKNDLENHLEDFELEVELLITLIKSEKGSLGFTVTKGNQRIGCYVHDVIQDPAKSDGRLKPGDRLIKVNDTDVTNMTHTDAVNLLRAASKTVRLVIGRVLELPRIPMLPHLLPDITLTCNKEELGFSLCGGHDSLYQVVYISDINPRSVAAIEGNLQLLDVIHYVNGVSTQGMTLEEVNRALDMSLPSLVLKATRNDLPVVPSSKRSAVSAPKSTKGNGSYSVGSCSQPALTPNDSFSTVAGEEINEISYPKGKCSTYQIKGSPNLTLPKESYIQEDDIYDDSQEAEVIQSLLDVVDEEAQNLLNENNAAGYSCGPGTLKMNGKLSEERTEDTDCDGSPLPEYFTEATKMNGCEEYCEEKVKSESLIQKPQEKKTDDDEITWGNDELPIERTNHEDSDKDHSFLTNDELAVLPVVKVLPSGKYTGANLKSVIRVLRGLLDQGIPSKELENLQELKPLDQCLIGQTKENRRKNRYKNILPYDATRVPLGDEGGYINASFIKIPVGKEEFVYIACQGPLPTTVGDFWQMIWEQKSTVIAMMTQEVEGEKIKCQRYWPNILGKTTMVSNRLRLALVRMQQLKGFVVRAMTLEDIQTREVRHISHLNFTAWPDHDTPSQPDDLLTFISYMRHIHRSGPIITHCSAGIGRSGTLICIDVVLGLISQDLDFDISDLVRCMRLQRHGMVQTEDQYIFCYQVILYVLTRLQAEEEQKQQPQLLK</sequence>
<comment type="function">
    <text evidence="17 20">Tyrosine phosphatase which negatively regulates FAS-induced apoptosis and NGFR-mediated pro-apoptotic signaling (PubMed:15611135). May regulate phosphoinositide 3-kinase (PI3K) signaling through dephosphorylation of PIK3R2 (PubMed:23604317).</text>
</comment>
<comment type="catalytic activity">
    <reaction evidence="17 18">
        <text>O-phospho-L-tyrosyl-[protein] + H2O = L-tyrosyl-[protein] + phosphate</text>
        <dbReference type="Rhea" id="RHEA:10684"/>
        <dbReference type="Rhea" id="RHEA-COMP:10136"/>
        <dbReference type="Rhea" id="RHEA-COMP:20101"/>
        <dbReference type="ChEBI" id="CHEBI:15377"/>
        <dbReference type="ChEBI" id="CHEBI:43474"/>
        <dbReference type="ChEBI" id="CHEBI:46858"/>
        <dbReference type="ChEBI" id="CHEBI:61978"/>
        <dbReference type="EC" id="3.1.3.48"/>
    </reaction>
</comment>
<comment type="subunit">
    <text evidence="2 9 10 11 12 13 14 16 18 19 20 22">Interacts (via the first PDZ domain) with PLEKHA1 and PLEKHA2 (PubMed:14516276). Interacts (via the second PDZ domain) with TNFRSF6 (Fas receptor) (via C-terminus) (PubMed:10704206). Interacts (via the second PDZ domain) with TRIP6 (via the third LIM domain and C-terminus) (PubMed:10400701, PubMed:10826496). Interacts (via the third PDZ domain) with NGFR (via C-terminal SVP motif) and PKN2 (via C-terminus) (PubMed:10544233, PubMed:11356191). Interacts (via the second or fourth PDZ domains) with PDLIM4 (via C-terminus only or via combined C-terminus and LIM domain, but not LIM domain only). Found in a complex with PDLIM4 and TRIP6 (By similarity). Interacts with PDLIM4; this interaction results in dephosphorylation of SRC 'Tyr-419' by this protein leading to its inactivation (PubMed:19307596). Interacts with BRD7 (By similarity). Interacts with RAPGEF6 (PubMed:12095257). Interacts with ARHGAP29 (PubMed:9305890). Interacts with PIK3R2; dephosphorylates PIK3R2 (PubMed:23604317). Interacts with FBXL2 (PubMed:23604317). Interacts (via the FERM domain) with ENTR1 (PubMed:23108400). Found in a complex with ENTR1, PTPN13 and GIT1 (PubMed:23108400).</text>
</comment>
<comment type="interaction">
    <interactant intactId="EBI-355227">
        <id>Q12923</id>
    </interactant>
    <interactant intactId="EBI-494743">
        <id>P25445</id>
        <label>FAS</label>
    </interactant>
    <organismsDiffer>false</organismsDiffer>
    <experiments>3</experiments>
</comment>
<comment type="interaction">
    <interactant intactId="EBI-355227">
        <id>Q12923</id>
    </interactant>
    <interactant intactId="EBI-740195">
        <id>Q9BUL8</id>
        <label>PDCD10</label>
    </interactant>
    <organismsDiffer>false</organismsDiffer>
    <experiments>3</experiments>
</comment>
<comment type="interaction">
    <interactant intactId="EBI-355227">
        <id>Q12923</id>
    </interactant>
    <interactant intactId="EBI-2693017">
        <id>Q8TEU7</id>
        <label>RAPGEF6</label>
    </interactant>
    <organismsDiffer>false</organismsDiffer>
    <experiments>4</experiments>
</comment>
<comment type="interaction">
    <interactant intactId="EBI-355227">
        <id>Q12923</id>
    </interactant>
    <interactant intactId="EBI-307104">
        <id>Q13501</id>
        <label>SQSTM1</label>
    </interactant>
    <organismsDiffer>false</organismsDiffer>
    <experiments>2</experiments>
</comment>
<comment type="subcellular location">
    <subcellularLocation>
        <location evidence="13">Cytoplasm</location>
        <location evidence="13">Cytoskeleton</location>
    </subcellularLocation>
    <subcellularLocation>
        <location evidence="12 13">Nucleus</location>
    </subcellularLocation>
    <subcellularLocation>
        <location evidence="13">Cell projection</location>
        <location evidence="13">Lamellipodium</location>
    </subcellularLocation>
    <text evidence="12 13">Colocalizes with F-actin (PubMed:10826496). Colocalizes with PKN2 in lamellipodia-like structure, regions of large actin turnover (PubMed:11356191).</text>
</comment>
<comment type="alternative products">
    <event type="alternative splicing"/>
    <isoform>
        <id>Q12923-1</id>
        <name>1</name>
        <sequence type="displayed"/>
    </isoform>
    <isoform>
        <id>Q12923-2</id>
        <name>2</name>
        <sequence type="described" ref="VSP_000496"/>
    </isoform>
    <isoform>
        <id>Q12923-3</id>
        <name>3</name>
        <sequence type="described" ref="VSP_000497"/>
    </isoform>
    <isoform>
        <id>Q12923-4</id>
        <name>4</name>
        <sequence type="described" ref="VSP_007921"/>
    </isoform>
</comment>
<comment type="tissue specificity">
    <text evidence="21">Expressed in keratinocytes (at protein level) (PubMed:29043977). Present in most tissues with the exception of the liver and skeletal muscle. Most abundant in lung, kidney and fetal brain.</text>
</comment>
<comment type="miscellaneous">
    <molecule>Isoform 4</molecule>
    <text evidence="28">May be due to a competing donor splice site.</text>
</comment>
<comment type="similarity">
    <text evidence="28">Belongs to the protein-tyrosine phosphatase family. Non-receptor class subfamily.</text>
</comment>
<comment type="sequence caution" evidence="28">
    <conflict type="miscellaneous discrepancy">
        <sequence resource="EMBL-CDS" id="AAH39610"/>
    </conflict>
    <text>Contaminating sequence. Potential poly-A sequence.</text>
</comment>
<comment type="online information" name="Atlas of Genetics and Cytogenetics in Oncology and Haematology">
    <link uri="https://atlasgeneticsoncology.org/gene/41912/PTPN13"/>
</comment>
<organism>
    <name type="scientific">Homo sapiens</name>
    <name type="common">Human</name>
    <dbReference type="NCBI Taxonomy" id="9606"/>
    <lineage>
        <taxon>Eukaryota</taxon>
        <taxon>Metazoa</taxon>
        <taxon>Chordata</taxon>
        <taxon>Craniata</taxon>
        <taxon>Vertebrata</taxon>
        <taxon>Euteleostomi</taxon>
        <taxon>Mammalia</taxon>
        <taxon>Eutheria</taxon>
        <taxon>Euarchontoglires</taxon>
        <taxon>Primates</taxon>
        <taxon>Haplorrhini</taxon>
        <taxon>Catarrhini</taxon>
        <taxon>Hominidae</taxon>
        <taxon>Homo</taxon>
    </lineage>
</organism>
<accession>Q12923</accession>
<accession>B2RTR0</accession>
<accession>Q15159</accession>
<accession>Q15263</accession>
<accession>Q15264</accession>
<accession>Q15265</accession>
<accession>Q15674</accession>
<accession>Q16826</accession>
<accession>Q8IWH7</accession>
<accession>Q9NYN9</accession>
<accession>Q9UDA8</accession>
<reference key="1">
    <citation type="journal article" date="1994" name="J. Biol. Chem.">
        <title>A novel protein-tyrosine phosphatase with homology to both the cytoskeletal proteins of the band 4.1 family and junction-associated guanylate kinases.</title>
        <authorList>
            <person name="Banville D."/>
            <person name="Ahmad S."/>
            <person name="Stocco R."/>
            <person name="Shen S.-H."/>
        </authorList>
    </citation>
    <scope>NUCLEOTIDE SEQUENCE [MRNA] (ISOFORM 4)</scope>
    <source>
        <tissue>Mammary carcinoma</tissue>
    </source>
</reference>
<reference key="2">
    <citation type="journal article" date="1994" name="FEBS Lett.">
        <title>Molecular cloning of a novel protein-tyrosine phosphatase containing a membrane-binding domain and GLGF repeats.</title>
        <authorList>
            <person name="Maekawa K."/>
            <person name="Imagawa N."/>
            <person name="Nagamatsu M."/>
            <person name="Harada S."/>
        </authorList>
    </citation>
    <scope>NUCLEOTIDE SEQUENCE [MRNA] (ISOFORMS 1; 2 AND 3)</scope>
    <scope>ALTERNATIVE SPLICING</scope>
    <source>
        <tissue>Leukemia</tissue>
    </source>
</reference>
<reference key="3">
    <citation type="journal article" date="1994" name="J. Biol. Chem.">
        <title>Cloning and characterization of PTPL1, a protein tyrosine phosphatase with similarities to cytoskeletal-associated proteins.</title>
        <authorList>
            <person name="Saras J."/>
            <person name="Claesson-Welsh L."/>
            <person name="Heldin C.-H."/>
            <person name="Gonez L.J."/>
        </authorList>
    </citation>
    <scope>NUCLEOTIDE SEQUENCE [MRNA] (ISOFORM 3)</scope>
    <source>
        <tissue>Fibroblast</tissue>
    </source>
</reference>
<reference key="4">
    <citation type="journal article" date="2004" name="Genome Res.">
        <title>The status, quality, and expansion of the NIH full-length cDNA project: the Mammalian Gene Collection (MGC).</title>
        <authorList>
            <consortium name="The MGC Project Team"/>
        </authorList>
    </citation>
    <scope>NUCLEOTIDE SEQUENCE [LARGE SCALE MRNA] (ISOFORM 3)</scope>
    <scope>NUCLEOTIDE SEQUENCE [LARGE SCALE MRNA] OF 1323-1922 (ISOFORM 1)</scope>
    <source>
        <tissue>Brain</tissue>
        <tissue>Eye</tissue>
    </source>
</reference>
<reference key="5">
    <citation type="submission" date="1994-06" db="EMBL/GenBank/DDBJ databases">
        <authorList>
            <person name="Wang H.-Y."/>
        </authorList>
    </citation>
    <scope>NUCLEOTIDE SEQUENCE [MRNA] OF 1216-2485 (ISOFORMS 1/2/3)</scope>
    <source>
        <tissue>Pancreas</tissue>
    </source>
</reference>
<reference key="6">
    <citation type="journal article" date="1995" name="Science">
        <title>FAP-1: a protein tyrosine phosphatase that associates with Fas.</title>
        <authorList>
            <person name="Sato T."/>
            <person name="Irie S."/>
            <person name="Kitada S."/>
            <person name="Reed J.C."/>
        </authorList>
    </citation>
    <scope>NUCLEOTIDE SEQUENCE [MRNA] OF 1279-1883 (ISOFORM 4)</scope>
    <source>
        <tissue>Brain</tissue>
    </source>
</reference>
<reference key="7">
    <citation type="journal article" date="1999" name="FEBS Lett.">
        <title>Functional interaction of Fas-associated phosphatase-1 (FAP-1) with p75(NTR) and their effect on NF-kappaB activation.</title>
        <authorList>
            <person name="Irie S."/>
            <person name="Hachiya T."/>
            <person name="Rabizadeh S."/>
            <person name="Maruyama W."/>
            <person name="Mukai J."/>
            <person name="Li Y."/>
            <person name="Reed J.C."/>
            <person name="Bredesen D.E."/>
            <person name="Sato T.A."/>
        </authorList>
    </citation>
    <scope>NUCLEOTIDE SEQUENCE [MRNA] OF 1323-1821 (ISOFORMS 1/2/3)</scope>
    <scope>INTERACTION WITH NGFR</scope>
</reference>
<reference key="8">
    <citation type="journal article" date="1993" name="Leukemia">
        <title>Identification of novel protein-tyrosine phosphatases in a human leukemia cell line, F-36P.</title>
        <authorList>
            <person name="Honda H."/>
            <person name="Shibuya M."/>
            <person name="Chiba S."/>
            <person name="Yazaki Y."/>
            <person name="Hirai H."/>
        </authorList>
    </citation>
    <scope>NUCLEOTIDE SEQUENCE [MRNA] OF 2298-2414</scope>
    <source>
        <tissue>Leukemia</tissue>
    </source>
</reference>
<reference key="9">
    <citation type="journal article" date="1997" name="J. Biol. Chem.">
        <title>A novel GTPase-activating protein for Rho interacts with a PDZ domain of the protein-tyrosine phosphatase PTPL1.</title>
        <authorList>
            <person name="Saras J."/>
            <person name="Franzen P."/>
            <person name="Aspenstroem P."/>
            <person name="Hellman U."/>
            <person name="Gonez L.J."/>
            <person name="Heldin C.-H."/>
        </authorList>
    </citation>
    <scope>INTERACTION WITH ARHGAP29</scope>
</reference>
<reference key="10">
    <citation type="journal article" date="1999" name="J. Biol. Chem.">
        <title>ZRP-1, a zyxin-related protein, interacts with the second PDZ domain of the cytosolic protein tyrosine phosphatase hPTP1E.</title>
        <authorList>
            <person name="Murthy K.K."/>
            <person name="Clark K."/>
            <person name="Fortin Y."/>
            <person name="Shen S.-H."/>
            <person name="Banville D."/>
        </authorList>
    </citation>
    <scope>INTERACTION WITH TRIP6</scope>
</reference>
<reference key="11">
    <citation type="journal article" date="2000" name="Eur. J. Cell Biol.">
        <title>The zyxin-related protein TRIP6 interacts with PDZ motifs in the adaptor protein RIL and the protein tyrosine phosphatase PTP-BL.</title>
        <authorList>
            <person name="Cuppen E."/>
            <person name="van Ham M."/>
            <person name="Wansink D.G."/>
            <person name="de Leeuw A."/>
            <person name="Wieringa B."/>
            <person name="Hendriks W."/>
        </authorList>
    </citation>
    <scope>INTERACTION TRIP6</scope>
    <scope>SUBCELLULAR LOCATION</scope>
</reference>
<reference key="12">
    <citation type="journal article" date="2001" name="FEBS Lett.">
        <title>The protein kinase C-related kinase PRK2 interacts with the protein tyrosine phosphatase PTP-BL via a novel PDZ domain binding motif.</title>
        <authorList>
            <person name="Gross C."/>
            <person name="Heumann R."/>
            <person name="Erdmann K.S."/>
        </authorList>
    </citation>
    <scope>INTERACTION WITH PKN2</scope>
    <scope>SUBCELLULAR LOCATION</scope>
</reference>
<reference key="13">
    <citation type="journal article" date="2003" name="Biochem. J.">
        <title>Interaction of the protein tyrosine phosphatase PTPL1 with the PtdIns(3,4)P2-binding adaptor protein TAPP1.</title>
        <authorList>
            <person name="Kimber W.A."/>
            <person name="Deak M."/>
            <person name="Prescott A.R."/>
            <person name="Alessi D.R."/>
        </authorList>
    </citation>
    <scope>INTERACTION WITH PLEKHA1 AND PLEKHA2</scope>
</reference>
<reference key="14">
    <citation type="journal article" date="2009" name="Anal. Chem.">
        <title>Lys-N and trypsin cover complementary parts of the phosphoproteome in a refined SCX-based approach.</title>
        <authorList>
            <person name="Gauci S."/>
            <person name="Helbig A.O."/>
            <person name="Slijper M."/>
            <person name="Krijgsveld J."/>
            <person name="Heck A.J."/>
            <person name="Mohammed S."/>
        </authorList>
    </citation>
    <scope>IDENTIFICATION BY MASS SPECTROMETRY [LARGE SCALE ANALYSIS]</scope>
</reference>
<reference key="15">
    <citation type="journal article" date="2009" name="J. Cell Biol.">
        <title>Reversion-induced LIM interaction with Src reveals a novel Src inactivation cycle.</title>
        <authorList>
            <person name="Zhang Y."/>
            <person name="Tu Y."/>
            <person name="Zhao J."/>
            <person name="Chen K."/>
            <person name="Wu C."/>
        </authorList>
    </citation>
    <scope>CATALYTIC ACTIVITY</scope>
    <scope>INTERACTION WITH PDLIM4</scope>
</reference>
<reference key="16">
    <citation type="journal article" date="2011" name="BMC Syst. Biol.">
        <title>Initial characterization of the human central proteome.</title>
        <authorList>
            <person name="Burkard T.R."/>
            <person name="Planyavsky M."/>
            <person name="Kaupe I."/>
            <person name="Breitwieser F.P."/>
            <person name="Buerckstuemmer T."/>
            <person name="Bennett K.L."/>
            <person name="Superti-Furga G."/>
            <person name="Colinge J."/>
        </authorList>
    </citation>
    <scope>IDENTIFICATION BY MASS SPECTROMETRY [LARGE SCALE ANALYSIS]</scope>
</reference>
<reference key="17">
    <citation type="journal article" date="2011" name="Sci. Signal.">
        <title>System-wide temporal characterization of the proteome and phosphoproteome of human embryonic stem cell differentiation.</title>
        <authorList>
            <person name="Rigbolt K.T."/>
            <person name="Prokhorova T.A."/>
            <person name="Akimov V."/>
            <person name="Henningsen J."/>
            <person name="Johansen P.T."/>
            <person name="Kratchmarova I."/>
            <person name="Kassem M."/>
            <person name="Mann M."/>
            <person name="Olsen J.V."/>
            <person name="Blagoev B."/>
        </authorList>
    </citation>
    <scope>PHOSPHORYLATION [LARGE SCALE ANALYSIS] AT SER-1029 AND SER-1033</scope>
    <scope>IDENTIFICATION BY MASS SPECTROMETRY [LARGE SCALE ANALYSIS]</scope>
</reference>
<reference key="18">
    <citation type="journal article" date="2013" name="J. Proteome Res.">
        <title>Toward a comprehensive characterization of a human cancer cell phosphoproteome.</title>
        <authorList>
            <person name="Zhou H."/>
            <person name="Di Palma S."/>
            <person name="Preisinger C."/>
            <person name="Peng M."/>
            <person name="Polat A.N."/>
            <person name="Heck A.J."/>
            <person name="Mohammed S."/>
        </authorList>
    </citation>
    <scope>PHOSPHORYLATION [LARGE SCALE ANALYSIS] AT SER-240; SER-890; SER-908 AND SER-1085</scope>
    <scope>IDENTIFICATION BY MASS SPECTROMETRY [LARGE SCALE ANALYSIS]</scope>
    <source>
        <tissue>Cervix carcinoma</tissue>
    </source>
</reference>
<reference key="19">
    <citation type="journal article" date="2013" name="Nat. Cell Biol.">
        <title>FBXL2- and PTPL1-mediated degradation of p110-free p85beta regulatory subunit controls the PI(3)K signalling cascade.</title>
        <authorList>
            <person name="Kuchay S."/>
            <person name="Duan S."/>
            <person name="Schenkein E."/>
            <person name="Peschiaroli A."/>
            <person name="Saraf A."/>
            <person name="Florens L."/>
            <person name="Washburn M.P."/>
            <person name="Pagano M."/>
        </authorList>
    </citation>
    <scope>FUNCTION</scope>
    <scope>INTERACTION WITH FBXL2 AND PIK3R2</scope>
</reference>
<reference key="20">
    <citation type="journal article" date="2013" name="Oncogene">
        <title>The serologically defined colon cancer antigen-3 interacts with the protein tyrosine phosphatase PTPN13 and is involved in the regulation of cytokinesis.</title>
        <authorList>
            <person name="Hagemann N."/>
            <person name="Ackermann N."/>
            <person name="Christmann J."/>
            <person name="Brier S."/>
            <person name="Yu F."/>
            <person name="Erdmann K.S."/>
        </authorList>
    </citation>
    <scope>IDENTIFICATION IN A COMPLEX WITH ENTR1 AND GIT1</scope>
    <scope>INTERACTION WITH ENTR1</scope>
</reference>
<reference key="21">
    <citation type="journal article" date="2017" name="Elife">
        <title>A protein phosphatase network controls the temporal and spatial dynamics of differentiation commitment in human epidermis.</title>
        <authorList>
            <person name="Mishra A."/>
            <person name="Oules B."/>
            <person name="Pisco A.O."/>
            <person name="Ly T."/>
            <person name="Liakath-Ali K."/>
            <person name="Walko G."/>
            <person name="Viswanathan P."/>
            <person name="Tihy M."/>
            <person name="Nijjher J."/>
            <person name="Dunn S.J."/>
            <person name="Lamond A.I."/>
            <person name="Watt F.M."/>
        </authorList>
    </citation>
    <scope>TISSUE SPECIFICITY</scope>
</reference>
<reference key="22">
    <citation type="journal article" date="2000" name="Biochemistry">
        <title>Solution structure of the PDZ2 domain from human phosphatase hPTP1E and its interactions with C-terminal peptides from the Fas receptor.</title>
        <authorList>
            <person name="Kozlov G."/>
            <person name="Gehring K."/>
            <person name="Ekiel I."/>
        </authorList>
    </citation>
    <scope>STRUCTURE BY NMR OF 1361-1456 UNCOMPLEXED AND IN COMPLEX WITH THE C-TERMINUS OF TNFRSF6</scope>
</reference>
<reference key="23">
    <citation type="journal article" date="2002" name="J. Mol. Biol.">
        <title>Solution structure of the PDZ2 domain from cytosolic human phosphatase hPTP1E complexed with a peptide reveals contribution of the beta2-beta3 loop to PDZ domain-ligand interactions.</title>
        <authorList>
            <person name="Kozlov G."/>
            <person name="Banville D."/>
            <person name="Gehring K."/>
            <person name="Ekiel I."/>
        </authorList>
    </citation>
    <scope>STRUCTURE BY NMR OF 1361-1456 IN COMPLEX WITH THE C-TERMINUS OF THE GUANINE NUCLEOTIDE EXCHANGE FACTOR RA-GEF-2</scope>
</reference>
<reference key="24">
    <citation type="journal article" date="2005" name="J. Biol. Chem.">
        <title>Crystal structure of the PTPL1/FAP-1 human tyrosine phosphatase mutated in colorectal cancer: evidence for a second phosphotyrosine substrate recognition pocket.</title>
        <authorList>
            <person name="Villa F."/>
            <person name="Deak M."/>
            <person name="Bloomberg G.B."/>
            <person name="Alessi D.R."/>
            <person name="van Aalten D.M."/>
        </authorList>
    </citation>
    <scope>X-RAY CRYSTALLOGRAPHY (1.85 ANGSTROMS) OF 2163-2477</scope>
    <scope>FUNCTION</scope>
    <scope>CATALYTIC ACTIVITY</scope>
    <scope>MUTAGENESIS OF ASP-2154; ARG-2205; GLN-2221; MET-2307; CYS-2408; ARG-2444; HIS-2448; GLY-2449 AND GLU-2474</scope>
    <scope>CHARACTERIZATION OF VARIANT VAL-2458</scope>
</reference>
<reference key="25">
    <citation type="journal article" date="2002" name="J. Hum. Genet.">
        <title>Head-to-head juxtaposition of Fas-associated phosphatase-1 (FAP-1) and c-Jun NH2-terminal kinase 3 (JNK3) genes: genomic structure and seven polymorphisms of the FAP-1 gene.</title>
        <authorList>
            <person name="Yoshida S."/>
            <person name="Harada H."/>
            <person name="Nagai H."/>
            <person name="Fukino K."/>
            <person name="Teramoto A."/>
            <person name="Emi M."/>
        </authorList>
    </citation>
    <scope>VARIANTS PRO-1419 AND MET-1522</scope>
</reference>
<keyword id="KW-0002">3D-structure</keyword>
<keyword id="KW-0025">Alternative splicing</keyword>
<keyword id="KW-0966">Cell projection</keyword>
<keyword id="KW-0175">Coiled coil</keyword>
<keyword id="KW-0963">Cytoplasm</keyword>
<keyword id="KW-0206">Cytoskeleton</keyword>
<keyword id="KW-0378">Hydrolase</keyword>
<keyword id="KW-0539">Nucleus</keyword>
<keyword id="KW-0597">Phosphoprotein</keyword>
<keyword id="KW-0904">Protein phosphatase</keyword>
<keyword id="KW-1267">Proteomics identification</keyword>
<keyword id="KW-1185">Reference proteome</keyword>
<keyword id="KW-0677">Repeat</keyword>